<organism>
    <name type="scientific">Clitoria ternatea</name>
    <name type="common">Butterfly pea</name>
    <dbReference type="NCBI Taxonomy" id="43366"/>
    <lineage>
        <taxon>Eukaryota</taxon>
        <taxon>Viridiplantae</taxon>
        <taxon>Streptophyta</taxon>
        <taxon>Embryophyta</taxon>
        <taxon>Tracheophyta</taxon>
        <taxon>Spermatophyta</taxon>
        <taxon>Magnoliopsida</taxon>
        <taxon>eudicotyledons</taxon>
        <taxon>Gunneridae</taxon>
        <taxon>Pentapetalae</taxon>
        <taxon>rosids</taxon>
        <taxon>fabids</taxon>
        <taxon>Fabales</taxon>
        <taxon>Fabaceae</taxon>
        <taxon>Papilionoideae</taxon>
        <taxon>50 kb inversion clade</taxon>
        <taxon>NPAAA clade</taxon>
        <taxon>indigoferoid/millettioid clade</taxon>
        <taxon>Phaseoleae</taxon>
        <taxon>Clitoria</taxon>
    </lineage>
</organism>
<dbReference type="SMR" id="P86903"/>
<dbReference type="GO" id="GO:0005576">
    <property type="term" value="C:extracellular region"/>
    <property type="evidence" value="ECO:0007669"/>
    <property type="project" value="UniProtKB-SubCell"/>
</dbReference>
<dbReference type="GO" id="GO:0006952">
    <property type="term" value="P:defense response"/>
    <property type="evidence" value="ECO:0007669"/>
    <property type="project" value="UniProtKB-KW"/>
</dbReference>
<dbReference type="InterPro" id="IPR005535">
    <property type="entry name" value="Cyclotide"/>
</dbReference>
<dbReference type="InterPro" id="IPR012323">
    <property type="entry name" value="Cyclotide_bracelet_CS"/>
</dbReference>
<dbReference type="InterPro" id="IPR036146">
    <property type="entry name" value="Cyclotide_sf"/>
</dbReference>
<dbReference type="Pfam" id="PF03784">
    <property type="entry name" value="Cyclotide"/>
    <property type="match status" value="1"/>
</dbReference>
<dbReference type="PIRSF" id="PIRSF037891">
    <property type="entry name" value="Cycloviolacin"/>
    <property type="match status" value="1"/>
</dbReference>
<dbReference type="SUPFAM" id="SSF57038">
    <property type="entry name" value="Cyclotides"/>
    <property type="match status" value="1"/>
</dbReference>
<dbReference type="PROSITE" id="PS51052">
    <property type="entry name" value="CYCLOTIDE"/>
    <property type="match status" value="1"/>
</dbReference>
<dbReference type="PROSITE" id="PS60008">
    <property type="entry name" value="CYCLOTIDE_BRACELET"/>
    <property type="match status" value="1"/>
</dbReference>
<reference evidence="5" key="1">
    <citation type="journal article" date="2011" name="Proc. Natl. Acad. Sci. U.S.A.">
        <title>Discovery of an unusual biosynthetic origin for circular proteins in legumes.</title>
        <authorList>
            <person name="Poth A.G."/>
            <person name="Colgrave M.L."/>
            <person name="Lyons R.E."/>
            <person name="Daly N.L."/>
            <person name="Craik D.J."/>
        </authorList>
    </citation>
    <scope>PROTEIN SEQUENCE</scope>
    <scope>CYCLIZATION</scope>
    <scope>MASS SPECTROMETRY</scope>
    <source>
        <tissue evidence="3">Leaf</tissue>
    </source>
</reference>
<protein>
    <recommendedName>
        <fullName evidence="4">Cyclotide cter-R</fullName>
    </recommendedName>
</protein>
<name>CYCR_CLITE</name>
<sequence>GIPCGESCVFIPCTVTALLGCSCKDKVCYKN</sequence>
<accession>P86903</accession>
<comment type="function">
    <text evidence="1 2">Probably participates in a plant defense mechanism.</text>
</comment>
<comment type="subcellular location">
    <subcellularLocation>
        <location evidence="1">Secreted</location>
    </subcellularLocation>
</comment>
<comment type="domain">
    <text evidence="5">The presence of a 'disulfide through disulfide knot' structurally defines this protein as a knottin.</text>
</comment>
<comment type="PTM">
    <text evidence="2 3">This is a cyclic peptide.</text>
</comment>
<comment type="mass spectrometry"/>
<comment type="similarity">
    <text evidence="2">Belongs to the cyclotide family. Bracelet subfamily.</text>
</comment>
<comment type="caution">
    <text evidence="5">This peptide is cyclic. The start position was chosen by similarity to cyclotide cter-B for which the DNA sequence is known.</text>
</comment>
<keyword id="KW-0903">Direct protein sequencing</keyword>
<keyword id="KW-1015">Disulfide bond</keyword>
<keyword id="KW-0960">Knottin</keyword>
<keyword id="KW-0558">Oxidation</keyword>
<keyword id="KW-0611">Plant defense</keyword>
<keyword id="KW-0964">Secreted</keyword>
<proteinExistence type="evidence at protein level"/>
<feature type="peptide" id="PRO_0000412643" description="Cyclotide cter-R" evidence="2 3">
    <location>
        <begin position="1"/>
        <end position="31"/>
    </location>
</feature>
<feature type="disulfide bond" evidence="1 2">
    <location>
        <begin position="4"/>
        <end position="21"/>
    </location>
</feature>
<feature type="disulfide bond" evidence="1 2">
    <location>
        <begin position="8"/>
        <end position="23"/>
    </location>
</feature>
<feature type="disulfide bond" evidence="1 2">
    <location>
        <begin position="13"/>
        <end position="28"/>
    </location>
</feature>
<feature type="cross-link" description="Cyclopeptide (Gly-Asn)" evidence="3">
    <location>
        <begin position="1"/>
        <end position="31"/>
    </location>
</feature>
<evidence type="ECO:0000250" key="1">
    <source>
        <dbReference type="UniProtKB" id="P86899"/>
    </source>
</evidence>
<evidence type="ECO:0000255" key="2">
    <source>
        <dbReference type="PROSITE-ProRule" id="PRU00395"/>
    </source>
</evidence>
<evidence type="ECO:0000269" key="3">
    <source>
    </source>
</evidence>
<evidence type="ECO:0000303" key="4">
    <source>
    </source>
</evidence>
<evidence type="ECO:0000305" key="5"/>